<gene>
    <name type="primary">Dys</name>
    <name type="synonym">det</name>
    <name type="ORF">CG34157</name>
</gene>
<name>DMDD_DROME</name>
<accession>Q0KI50</accession>
<accession>Q2VQZ5</accession>
<accession>Q6IJP4</accession>
<keyword id="KW-0009">Actin-binding</keyword>
<keyword id="KW-0025">Alternative splicing</keyword>
<keyword id="KW-0106">Calcium</keyword>
<keyword id="KW-1003">Cell membrane</keyword>
<keyword id="KW-0963">Cytoplasm</keyword>
<keyword id="KW-0206">Cytoskeleton</keyword>
<keyword id="KW-0472">Membrane</keyword>
<keyword id="KW-0479">Metal-binding</keyword>
<keyword id="KW-0597">Phosphoprotein</keyword>
<keyword id="KW-1185">Reference proteome</keyword>
<keyword id="KW-0677">Repeat</keyword>
<keyword id="KW-0862">Zinc</keyword>
<keyword id="KW-0863">Zinc-finger</keyword>
<comment type="function">
    <text evidence="10">Required for the maintenance of appropriate synaptic retrograde communication and the stabilization of muscle cell architecture or physiology. May play a role in anchoring the cytoskeleton to the plasma membrane.</text>
</comment>
<comment type="subunit">
    <text evidence="9">Component of the dystrophin associated protein complex (DAPC). Interacts with Dg, via the Dg WW domain binding sites.</text>
</comment>
<comment type="subcellular location">
    <subcellularLocation>
        <location evidence="8">Cell membrane</location>
        <location evidence="8">Sarcolemma</location>
        <topology evidence="8">Peripheral membrane protein</topology>
        <orientation evidence="8">Cytoplasmic side</orientation>
    </subcellularLocation>
    <subcellularLocation>
        <location evidence="8">Cytoplasm</location>
        <location evidence="8">Cytoskeleton</location>
    </subcellularLocation>
</comment>
<comment type="alternative products">
    <event type="alternative splicing"/>
    <isoform>
        <id>Q0KI50-1</id>
        <name evidence="7">D</name>
        <name evidence="10">Dp205</name>
        <sequence type="displayed"/>
    </isoform>
    <isoform>
        <id>Q9VDW6-1</id>
        <name evidence="7">A</name>
        <name evidence="2">DLP2</name>
        <sequence type="external"/>
    </isoform>
    <isoform>
        <id>Q9VDW3-1</id>
        <name evidence="7">B</name>
        <name evidence="1">Dp186</name>
        <sequence type="external"/>
    </isoform>
    <isoform>
        <id>Q9VDW6-2</id>
        <name evidence="7">C</name>
        <sequence type="external"/>
    </isoform>
    <isoform>
        <id>Q7YU29-1</id>
        <name evidence="7">E</name>
        <name evidence="10">Dp117</name>
        <sequence type="external"/>
    </isoform>
    <isoform>
        <id>Q9VDW6-3</id>
        <name evidence="7">F</name>
        <name evidence="2">DLP1</name>
        <sequence type="external"/>
    </isoform>
    <isoform>
        <id>Q9VDW6-4</id>
        <name evidence="7">G</name>
        <name evidence="2">DLP3</name>
        <sequence type="external"/>
    </isoform>
    <isoform>
        <id>Q9VDW6-5</id>
        <name evidence="7">H</name>
        <sequence type="external"/>
    </isoform>
</comment>
<comment type="tissue specificity">
    <text evidence="10">During embryogenesis and in third instar larvae, expression is seen in pericardial cells of the dorsal vessel and in the ventral nerve cord. Expression is absent from both the embryonic and larval musculature.</text>
</comment>
<comment type="disruption phenotype">
    <text evidence="10">Flies that have reduced expression of all isoforms (due to transgenic RNA interference targeting the common C-terminal region) exhibit severe muscle degeneration in larvae and adult flies. Muscles were either ruptured, absent, or the fibers were detached from their attachment sites at tendon cells. These are necrotic, not apoptotic processes.</text>
</comment>
<comment type="sequence caution" evidence="14">
    <conflict type="erroneous gene model prediction">
        <sequence resource="EMBL-CDS" id="DAA04178"/>
    </conflict>
</comment>
<protein>
    <recommendedName>
        <fullName evidence="12 13">Dystrophin, isoform D</fullName>
    </recommendedName>
    <alternativeName>
        <fullName evidence="2">Protein detached</fullName>
    </alternativeName>
</protein>
<proteinExistence type="evidence at protein level"/>
<sequence length="1854" mass="205723">MTTTITAKIAQRQQQHQQHQQQQLQHQQQQQQQQQHQPTSSMNGFRITGYPAAATPPARSNPIYAKPNAHELDLHISESLLYPGSTTQQQQALQSSPGPPPQLTSMLPSSGLPGAAQPIALKGNNPFLNSPSPTEAAPGVPTGLSSAQPATSASSGNYEMPEYAEPSRLRGLKQRPHSIAVGGSPAQSSFVDYNAQQQQRLLQLSRQQQQLRNAVTAAASTANGGDKETLYAALFQQYRQSPTNGQPAPPVPLHRKPAAAPVVPRRSQSTPRPPLQQQQQQQQAGINGQINGNGNQRPRSLDRFNGGLQSEAPPIPLRRFPNGNGNNNNGTLSRQKSPKKSSSADNMLMSPAGSQVNTMRHSISFHGGQETENGSKAEQTRPMSYAAPAPDQAYLEHQLRAYSEQLRTITESVRKYSEQAKLLSELKRQQQLAKQSQTNLNLLTPTTCNNSTGSNGNNNFQPNMISPEIVSKSLASLSTSQANEAQTPSNQLRLFLDNIRSSMRQEYQQHMPDDVLKPTSTLKRNGTDSLVTSNTAAKPEVEATPTPSDQLRQFLDAIRANKIPESVDKPKMTSSQTLDSFISKPLQMPDVTSGTPGGGVVGGQAASGGVAVNGQTNGIPTRRRPKSSIIPSSSNGKLEQREHSLVTSESFHQISDNLRLMSEDLQALSPSKAIPSSASSNSLKSLAANGGSSLTTELRVITSSPYSTSPKLQQMVMSKSNSSLGSVTTPSSATTTPSTAPMITDFNEILDSFQAMADKYKSKGSYDYLRKCSEALRQHSLQLKLQQQHQAHQQQQLPAHQQQQHQQQQQQQIQNGFASDDNSSSCSTTPGSIREAVQNLLLQPRNGFQILDDRMRLFIDIIDSQDRLSQDLQSEIETHRVVYDRLDGTGRKLLGSLTSQEDAVMLQRRLDEMNQRWNNLKSKSIAIRNRLESNSEHWNALLLSLRELTEWVIRKDTELSTLGLGPVRGDAVSLQKQLDDHKAFRRQLEDKRPIVESNLTSGRQYIANEAAVSDTSDTEANHDSDSRYMSAEEQSRELTRSIRREVGKLSEQWNNLIDRSDNWKHRLDEYMTKMRQFQKILEDLSSRVALAEQTKTSWLPPSSVGEANEQMQQLQRLRDKMTTASALLDDCNEQQSFFTANQVLVPTPCLSKLEDLNTRMKLLQIAMDERQKVLCQAGAQQTHENGDDGRTTSNSGTIGPLPNLGQSVKPPWERATTAANVPYYIDHERETTHWDHPEMIELMKGLADLNEIRFSAYRTAMKLRSVQKRLALDRISMSTACESFDRHGLRAQNDKLIDIPDMTTVLHSLYVTIDKIDLTLMLDLAINWILNVYDSQRTGQIRVLSFKVGLVLLCKGHLEEKYRYLFRLVADTDRRADQRRLGLLLHDCIQVPRQLGEVAAFGGSNIEPSVRSCLEQAGISQEAIDGNQDISIELQHFLGWLQHEPQSLVWLPVLHRLAAAEAAKHQAKCNICKEYPIVGFRYRCLKCFNFDMCQKCFFFGRNAKNHKLTHPMHEYCTTTTSTEDVRDFTRALKNKFKSRKYFKKHPRVGYLPVQSVLEGDALESPAPSPQHTTHQLQNDMHSRLEMYASRLAQVEYGGTGSNSTPDSDDEHQLIAQYCQALPGTSNGSAPKSPVQVMAAMDAEQREELEAIIRDLEEENANLQAEYQQLCSKEQSGMPEDSNGMQHSSSSMTGLSGQGEQGQDMMAEAKLLRQHKGRLEARMQILEDHNRQLEAQLQRLRQLLDEPNGGGSSATSSGLPSAPGSALNSKPNTLQTRSVTASQLNTDSPAKMNQQNGHYEHNSKNSSGLVTVITEQELESINDDLEDSSSSNTTNTTTTTTTTATTEKTCVELQK</sequence>
<dbReference type="EMBL" id="AY875639">
    <property type="protein sequence ID" value="AAX59985.1"/>
    <property type="molecule type" value="mRNA"/>
</dbReference>
<dbReference type="EMBL" id="AE014297">
    <property type="protein sequence ID" value="ABI31177.1"/>
    <property type="molecule type" value="Genomic_DNA"/>
</dbReference>
<dbReference type="EMBL" id="BK002672">
    <property type="protein sequence ID" value="DAA04178.1"/>
    <property type="status" value="ALT_SEQ"/>
    <property type="molecule type" value="Genomic_DNA"/>
</dbReference>
<dbReference type="RefSeq" id="NP_001036725.1">
    <molecule id="Q0KI50-1"/>
    <property type="nucleotide sequence ID" value="NM_001043260.2"/>
</dbReference>
<dbReference type="SMR" id="Q0KI50"/>
<dbReference type="BioGRID" id="67322">
    <property type="interactions" value="74"/>
</dbReference>
<dbReference type="IntAct" id="Q0KI50">
    <property type="interactions" value="5"/>
</dbReference>
<dbReference type="iPTMnet" id="Q0KI50"/>
<dbReference type="DNASU" id="42327"/>
<dbReference type="EnsemblMetazoa" id="FBtr0110915">
    <molecule id="Q0KI50-1"/>
    <property type="protein sequence ID" value="FBpp0110215"/>
    <property type="gene ID" value="FBgn0260003"/>
</dbReference>
<dbReference type="GeneID" id="42327"/>
<dbReference type="UCSC" id="CG34157-RD">
    <molecule id="Q0KI50-1"/>
    <property type="organism name" value="d. melanogaster"/>
</dbReference>
<dbReference type="AGR" id="FB:FBgn0260003"/>
<dbReference type="CTD" id="42327"/>
<dbReference type="FlyBase" id="FBgn0260003">
    <property type="gene designation" value="Dys"/>
</dbReference>
<dbReference type="VEuPathDB" id="VectorBase:FBgn0260003"/>
<dbReference type="GeneTree" id="ENSGT00940000166230"/>
<dbReference type="HOGENOM" id="CLU_236807_0_0_1"/>
<dbReference type="OrthoDB" id="10057795at2759"/>
<dbReference type="BioGRID-ORCS" id="42327">
    <property type="hits" value="0 hits in 3 CRISPR screens"/>
</dbReference>
<dbReference type="GenomeRNAi" id="42327"/>
<dbReference type="Proteomes" id="UP000000803">
    <property type="component" value="Chromosome 3R"/>
</dbReference>
<dbReference type="Bgee" id="FBgn0260003">
    <property type="expression patterns" value="Expressed in adult brain perineurial glial cell (Drosophila) in insect head and 274 other cell types or tissues"/>
</dbReference>
<dbReference type="ExpressionAtlas" id="Q0KI50">
    <property type="expression patterns" value="baseline and differential"/>
</dbReference>
<dbReference type="GO" id="GO:0005938">
    <property type="term" value="C:cell cortex"/>
    <property type="evidence" value="ECO:0007005"/>
    <property type="project" value="FlyBase"/>
</dbReference>
<dbReference type="GO" id="GO:0030054">
    <property type="term" value="C:cell junction"/>
    <property type="evidence" value="ECO:0000318"/>
    <property type="project" value="GO_Central"/>
</dbReference>
<dbReference type="GO" id="GO:0042995">
    <property type="term" value="C:cell projection"/>
    <property type="evidence" value="ECO:0000318"/>
    <property type="project" value="GO_Central"/>
</dbReference>
<dbReference type="GO" id="GO:0030864">
    <property type="term" value="C:cortical actin cytoskeleton"/>
    <property type="evidence" value="ECO:0000318"/>
    <property type="project" value="GO_Central"/>
</dbReference>
<dbReference type="GO" id="GO:0005737">
    <property type="term" value="C:cytoplasm"/>
    <property type="evidence" value="ECO:0000314"/>
    <property type="project" value="FlyBase"/>
</dbReference>
<dbReference type="GO" id="GO:0005856">
    <property type="term" value="C:cytoskeleton"/>
    <property type="evidence" value="ECO:0000314"/>
    <property type="project" value="UniProtKB"/>
</dbReference>
<dbReference type="GO" id="GO:0016010">
    <property type="term" value="C:dystrophin-associated glycoprotein complex"/>
    <property type="evidence" value="ECO:0000353"/>
    <property type="project" value="FlyBase"/>
</dbReference>
<dbReference type="GO" id="GO:0031594">
    <property type="term" value="C:neuromuscular junction"/>
    <property type="evidence" value="ECO:0000315"/>
    <property type="project" value="FlyBase"/>
</dbReference>
<dbReference type="GO" id="GO:0005886">
    <property type="term" value="C:plasma membrane"/>
    <property type="evidence" value="ECO:0000318"/>
    <property type="project" value="GO_Central"/>
</dbReference>
<dbReference type="GO" id="GO:0042383">
    <property type="term" value="C:sarcolemma"/>
    <property type="evidence" value="ECO:0007669"/>
    <property type="project" value="UniProtKB-SubCell"/>
</dbReference>
<dbReference type="GO" id="GO:0045202">
    <property type="term" value="C:synapse"/>
    <property type="evidence" value="ECO:0000314"/>
    <property type="project" value="UniProtKB"/>
</dbReference>
<dbReference type="GO" id="GO:0030018">
    <property type="term" value="C:Z disc"/>
    <property type="evidence" value="ECO:0000318"/>
    <property type="project" value="GO_Central"/>
</dbReference>
<dbReference type="GO" id="GO:0051015">
    <property type="term" value="F:actin filament binding"/>
    <property type="evidence" value="ECO:0000318"/>
    <property type="project" value="GO_Central"/>
</dbReference>
<dbReference type="GO" id="GO:0008307">
    <property type="term" value="F:structural constituent of muscle"/>
    <property type="evidence" value="ECO:0000250"/>
    <property type="project" value="FlyBase"/>
</dbReference>
<dbReference type="GO" id="GO:0050699">
    <property type="term" value="F:WW domain binding"/>
    <property type="evidence" value="ECO:0000353"/>
    <property type="project" value="FlyBase"/>
</dbReference>
<dbReference type="GO" id="GO:0008270">
    <property type="term" value="F:zinc ion binding"/>
    <property type="evidence" value="ECO:0007669"/>
    <property type="project" value="UniProtKB-KW"/>
</dbReference>
<dbReference type="GO" id="GO:0030036">
    <property type="term" value="P:actin cytoskeleton organization"/>
    <property type="evidence" value="ECO:0000318"/>
    <property type="project" value="GO_Central"/>
</dbReference>
<dbReference type="GO" id="GO:0030010">
    <property type="term" value="P:establishment of cell polarity"/>
    <property type="evidence" value="ECO:0000315"/>
    <property type="project" value="FlyBase"/>
</dbReference>
<dbReference type="GO" id="GO:0008586">
    <property type="term" value="P:imaginal disc-derived wing vein morphogenesis"/>
    <property type="evidence" value="ECO:0000315"/>
    <property type="project" value="FlyBase"/>
</dbReference>
<dbReference type="GO" id="GO:0007474">
    <property type="term" value="P:imaginal disc-derived wing vein specification"/>
    <property type="evidence" value="ECO:0000315"/>
    <property type="project" value="FlyBase"/>
</dbReference>
<dbReference type="GO" id="GO:0048790">
    <property type="term" value="P:maintenance of presynaptic active zone structure"/>
    <property type="evidence" value="ECO:0000315"/>
    <property type="project" value="FlyBase"/>
</dbReference>
<dbReference type="GO" id="GO:0046716">
    <property type="term" value="P:muscle cell cellular homeostasis"/>
    <property type="evidence" value="ECO:0000315"/>
    <property type="project" value="FlyBase"/>
</dbReference>
<dbReference type="GO" id="GO:0055001">
    <property type="term" value="P:muscle cell development"/>
    <property type="evidence" value="ECO:0000318"/>
    <property type="project" value="GO_Central"/>
</dbReference>
<dbReference type="GO" id="GO:0007517">
    <property type="term" value="P:muscle organ development"/>
    <property type="evidence" value="ECO:0000315"/>
    <property type="project" value="UniProtKB"/>
</dbReference>
<dbReference type="GO" id="GO:0007274">
    <property type="term" value="P:neuromuscular synaptic transmission"/>
    <property type="evidence" value="ECO:0000314"/>
    <property type="project" value="FlyBase"/>
</dbReference>
<dbReference type="GO" id="GO:0046928">
    <property type="term" value="P:regulation of neurotransmitter secretion"/>
    <property type="evidence" value="ECO:0000314"/>
    <property type="project" value="FlyBase"/>
</dbReference>
<dbReference type="GO" id="GO:0048172">
    <property type="term" value="P:regulation of short-term neuronal synaptic plasticity"/>
    <property type="evidence" value="ECO:0000314"/>
    <property type="project" value="FlyBase"/>
</dbReference>
<dbReference type="CDD" id="cd16242">
    <property type="entry name" value="EFh_DMD_like"/>
    <property type="match status" value="1"/>
</dbReference>
<dbReference type="CDD" id="cd00176">
    <property type="entry name" value="SPEC"/>
    <property type="match status" value="1"/>
</dbReference>
<dbReference type="CDD" id="cd00201">
    <property type="entry name" value="WW"/>
    <property type="match status" value="1"/>
</dbReference>
<dbReference type="CDD" id="cd02334">
    <property type="entry name" value="ZZ_dystrophin"/>
    <property type="match status" value="1"/>
</dbReference>
<dbReference type="FunFam" id="3.30.60.90:FF:000001">
    <property type="entry name" value="Dystrophin isoform 2"/>
    <property type="match status" value="1"/>
</dbReference>
<dbReference type="FunFam" id="1.20.58.60:FF:000151">
    <property type="entry name" value="dystrophin, isoforms A/C/F/G/H isoform X2"/>
    <property type="match status" value="1"/>
</dbReference>
<dbReference type="Gene3D" id="1.20.58.60">
    <property type="match status" value="2"/>
</dbReference>
<dbReference type="Gene3D" id="2.20.70.10">
    <property type="match status" value="1"/>
</dbReference>
<dbReference type="Gene3D" id="3.30.60.90">
    <property type="match status" value="1"/>
</dbReference>
<dbReference type="Gene3D" id="1.10.238.10">
    <property type="entry name" value="EF-hand"/>
    <property type="match status" value="2"/>
</dbReference>
<dbReference type="InterPro" id="IPR011992">
    <property type="entry name" value="EF-hand-dom_pair"/>
</dbReference>
<dbReference type="InterPro" id="IPR015153">
    <property type="entry name" value="EF-hand_dom_typ1"/>
</dbReference>
<dbReference type="InterPro" id="IPR015154">
    <property type="entry name" value="EF-hand_dom_typ2"/>
</dbReference>
<dbReference type="InterPro" id="IPR050774">
    <property type="entry name" value="KCMF1/Dystrophin"/>
</dbReference>
<dbReference type="InterPro" id="IPR018159">
    <property type="entry name" value="Spectrin/alpha-actinin"/>
</dbReference>
<dbReference type="InterPro" id="IPR001202">
    <property type="entry name" value="WW_dom"/>
</dbReference>
<dbReference type="InterPro" id="IPR036020">
    <property type="entry name" value="WW_dom_sf"/>
</dbReference>
<dbReference type="InterPro" id="IPR000433">
    <property type="entry name" value="Znf_ZZ"/>
</dbReference>
<dbReference type="InterPro" id="IPR043145">
    <property type="entry name" value="Znf_ZZ_sf"/>
</dbReference>
<dbReference type="PANTHER" id="PTHR12268:SF14">
    <property type="entry name" value="DYSTROPHIN-1"/>
    <property type="match status" value="1"/>
</dbReference>
<dbReference type="PANTHER" id="PTHR12268">
    <property type="entry name" value="E3 UBIQUITIN-PROTEIN LIGASE KCMF1"/>
    <property type="match status" value="1"/>
</dbReference>
<dbReference type="Pfam" id="PF09068">
    <property type="entry name" value="EF-hand_2"/>
    <property type="match status" value="1"/>
</dbReference>
<dbReference type="Pfam" id="PF09069">
    <property type="entry name" value="EF-hand_3"/>
    <property type="match status" value="1"/>
</dbReference>
<dbReference type="Pfam" id="PF00569">
    <property type="entry name" value="ZZ"/>
    <property type="match status" value="1"/>
</dbReference>
<dbReference type="SMART" id="SM00150">
    <property type="entry name" value="SPEC"/>
    <property type="match status" value="3"/>
</dbReference>
<dbReference type="SMART" id="SM00456">
    <property type="entry name" value="WW"/>
    <property type="match status" value="1"/>
</dbReference>
<dbReference type="SMART" id="SM00291">
    <property type="entry name" value="ZnF_ZZ"/>
    <property type="match status" value="1"/>
</dbReference>
<dbReference type="SUPFAM" id="SSF47473">
    <property type="entry name" value="EF-hand"/>
    <property type="match status" value="2"/>
</dbReference>
<dbReference type="SUPFAM" id="SSF57850">
    <property type="entry name" value="RING/U-box"/>
    <property type="match status" value="1"/>
</dbReference>
<dbReference type="SUPFAM" id="SSF46966">
    <property type="entry name" value="Spectrin repeat"/>
    <property type="match status" value="2"/>
</dbReference>
<dbReference type="SUPFAM" id="SSF51045">
    <property type="entry name" value="WW domain"/>
    <property type="match status" value="1"/>
</dbReference>
<dbReference type="PROSITE" id="PS50020">
    <property type="entry name" value="WW_DOMAIN_2"/>
    <property type="match status" value="1"/>
</dbReference>
<dbReference type="PROSITE" id="PS01357">
    <property type="entry name" value="ZF_ZZ_1"/>
    <property type="match status" value="1"/>
</dbReference>
<dbReference type="PROSITE" id="PS50135">
    <property type="entry name" value="ZF_ZZ_2"/>
    <property type="match status" value="1"/>
</dbReference>
<organism>
    <name type="scientific">Drosophila melanogaster</name>
    <name type="common">Fruit fly</name>
    <dbReference type="NCBI Taxonomy" id="7227"/>
    <lineage>
        <taxon>Eukaryota</taxon>
        <taxon>Metazoa</taxon>
        <taxon>Ecdysozoa</taxon>
        <taxon>Arthropoda</taxon>
        <taxon>Hexapoda</taxon>
        <taxon>Insecta</taxon>
        <taxon>Pterygota</taxon>
        <taxon>Neoptera</taxon>
        <taxon>Endopterygota</taxon>
        <taxon>Diptera</taxon>
        <taxon>Brachycera</taxon>
        <taxon>Muscomorpha</taxon>
        <taxon>Ephydroidea</taxon>
        <taxon>Drosophilidae</taxon>
        <taxon>Drosophila</taxon>
        <taxon>Sophophora</taxon>
    </lineage>
</organism>
<evidence type="ECO:0000250" key="1">
    <source>
        <dbReference type="UniProtKB" id="Q9VDW3"/>
    </source>
</evidence>
<evidence type="ECO:0000250" key="2">
    <source>
        <dbReference type="UniProtKB" id="Q9VDW6"/>
    </source>
</evidence>
<evidence type="ECO:0000255" key="3"/>
<evidence type="ECO:0000255" key="4">
    <source>
        <dbReference type="PROSITE-ProRule" id="PRU00224"/>
    </source>
</evidence>
<evidence type="ECO:0000255" key="5">
    <source>
        <dbReference type="PROSITE-ProRule" id="PRU00228"/>
    </source>
</evidence>
<evidence type="ECO:0000256" key="6">
    <source>
        <dbReference type="SAM" id="MobiDB-lite"/>
    </source>
</evidence>
<evidence type="ECO:0000269" key="7">
    <source>
    </source>
</evidence>
<evidence type="ECO:0000269" key="8">
    <source>
    </source>
</evidence>
<evidence type="ECO:0000269" key="9">
    <source>
    </source>
</evidence>
<evidence type="ECO:0000269" key="10">
    <source>
    </source>
</evidence>
<evidence type="ECO:0000269" key="11">
    <source>
    </source>
</evidence>
<evidence type="ECO:0000303" key="12">
    <source>
    </source>
</evidence>
<evidence type="ECO:0000303" key="13">
    <source>
    </source>
</evidence>
<evidence type="ECO:0000305" key="14"/>
<evidence type="ECO:0000312" key="15">
    <source>
        <dbReference type="EMBL" id="AAX59985.1"/>
    </source>
</evidence>
<evidence type="ECO:0000312" key="16">
    <source>
        <dbReference type="EMBL" id="ABI31177.1"/>
    </source>
</evidence>
<evidence type="ECO:0000312" key="17">
    <source>
        <dbReference type="EMBL" id="DAA04178.1"/>
    </source>
</evidence>
<feature type="chain" id="PRO_0000365454" description="Dystrophin, isoform D">
    <location>
        <begin position="1"/>
        <end position="1854"/>
    </location>
</feature>
<feature type="repeat" description="Spectrin 1" evidence="3">
    <location>
        <begin position="936"/>
        <end position="1069"/>
    </location>
</feature>
<feature type="repeat" description="Spectrin 2" evidence="3">
    <location>
        <begin position="1072"/>
        <end position="1176"/>
    </location>
</feature>
<feature type="domain" description="WW" evidence="4">
    <location>
        <begin position="1206"/>
        <end position="1239"/>
    </location>
</feature>
<feature type="zinc finger region" description="ZZ-type" evidence="5">
    <location>
        <begin position="1464"/>
        <end position="1520"/>
    </location>
</feature>
<feature type="region of interest" description="Disordered" evidence="6">
    <location>
        <begin position="1"/>
        <end position="65"/>
    </location>
</feature>
<feature type="region of interest" description="Disordered" evidence="6">
    <location>
        <begin position="84"/>
        <end position="161"/>
    </location>
</feature>
<feature type="region of interest" description="Disordered" evidence="6">
    <location>
        <begin position="240"/>
        <end position="352"/>
    </location>
</feature>
<feature type="region of interest" description="Disordered" evidence="6">
    <location>
        <begin position="516"/>
        <end position="548"/>
    </location>
</feature>
<feature type="region of interest" description="Disordered" evidence="6">
    <location>
        <begin position="595"/>
        <end position="650"/>
    </location>
</feature>
<feature type="region of interest" description="Disordered" evidence="6">
    <location>
        <begin position="716"/>
        <end position="740"/>
    </location>
</feature>
<feature type="region of interest" description="Disordered" evidence="6">
    <location>
        <begin position="783"/>
        <end position="830"/>
    </location>
</feature>
<feature type="region of interest" description="Disordered" evidence="6">
    <location>
        <begin position="1012"/>
        <end position="1036"/>
    </location>
</feature>
<feature type="region of interest" description="Disordered" evidence="6">
    <location>
        <begin position="1179"/>
        <end position="1209"/>
    </location>
</feature>
<feature type="region of interest" description="Disordered" evidence="6">
    <location>
        <begin position="1673"/>
        <end position="1701"/>
    </location>
</feature>
<feature type="region of interest" description="Disordered" evidence="6">
    <location>
        <begin position="1744"/>
        <end position="1854"/>
    </location>
</feature>
<feature type="compositionally biased region" description="Low complexity" evidence="6">
    <location>
        <begin position="11"/>
        <end position="37"/>
    </location>
</feature>
<feature type="compositionally biased region" description="Low complexity" evidence="6">
    <location>
        <begin position="84"/>
        <end position="96"/>
    </location>
</feature>
<feature type="compositionally biased region" description="Polar residues" evidence="6">
    <location>
        <begin position="143"/>
        <end position="157"/>
    </location>
</feature>
<feature type="compositionally biased region" description="Low complexity" evidence="6">
    <location>
        <begin position="276"/>
        <end position="296"/>
    </location>
</feature>
<feature type="compositionally biased region" description="Polar residues" evidence="6">
    <location>
        <begin position="331"/>
        <end position="345"/>
    </location>
</feature>
<feature type="compositionally biased region" description="Polar residues" evidence="6">
    <location>
        <begin position="518"/>
        <end position="536"/>
    </location>
</feature>
<feature type="compositionally biased region" description="Gly residues" evidence="6">
    <location>
        <begin position="595"/>
        <end position="606"/>
    </location>
</feature>
<feature type="compositionally biased region" description="Polar residues" evidence="6">
    <location>
        <begin position="716"/>
        <end position="727"/>
    </location>
</feature>
<feature type="compositionally biased region" description="Low complexity" evidence="6">
    <location>
        <begin position="728"/>
        <end position="740"/>
    </location>
</feature>
<feature type="compositionally biased region" description="Low complexity" evidence="6">
    <location>
        <begin position="783"/>
        <end position="814"/>
    </location>
</feature>
<feature type="compositionally biased region" description="Polar residues" evidence="6">
    <location>
        <begin position="815"/>
        <end position="830"/>
    </location>
</feature>
<feature type="compositionally biased region" description="Polar residues" evidence="6">
    <location>
        <begin position="1682"/>
        <end position="1694"/>
    </location>
</feature>
<feature type="compositionally biased region" description="Polar residues" evidence="6">
    <location>
        <begin position="1765"/>
        <end position="1796"/>
    </location>
</feature>
<feature type="compositionally biased region" description="Acidic residues" evidence="6">
    <location>
        <begin position="1815"/>
        <end position="1826"/>
    </location>
</feature>
<feature type="compositionally biased region" description="Low complexity" evidence="6">
    <location>
        <begin position="1827"/>
        <end position="1845"/>
    </location>
</feature>
<feature type="binding site" evidence="5">
    <location>
        <position position="1469"/>
    </location>
    <ligand>
        <name>Zn(2+)</name>
        <dbReference type="ChEBI" id="CHEBI:29105"/>
        <label>1</label>
    </ligand>
</feature>
<feature type="binding site" evidence="5">
    <location>
        <position position="1472"/>
    </location>
    <ligand>
        <name>Zn(2+)</name>
        <dbReference type="ChEBI" id="CHEBI:29105"/>
        <label>1</label>
    </ligand>
</feature>
<feature type="binding site" evidence="5">
    <location>
        <position position="1484"/>
    </location>
    <ligand>
        <name>Zn(2+)</name>
        <dbReference type="ChEBI" id="CHEBI:29105"/>
        <label>2</label>
    </ligand>
</feature>
<feature type="binding site" evidence="5">
    <location>
        <position position="1487"/>
    </location>
    <ligand>
        <name>Zn(2+)</name>
        <dbReference type="ChEBI" id="CHEBI:29105"/>
        <label>2</label>
    </ligand>
</feature>
<feature type="binding site" evidence="5">
    <location>
        <position position="1493"/>
    </location>
    <ligand>
        <name>Zn(2+)</name>
        <dbReference type="ChEBI" id="CHEBI:29105"/>
        <label>1</label>
    </ligand>
</feature>
<feature type="binding site" evidence="5">
    <location>
        <position position="1496"/>
    </location>
    <ligand>
        <name>Zn(2+)</name>
        <dbReference type="ChEBI" id="CHEBI:29105"/>
        <label>1</label>
    </ligand>
</feature>
<feature type="binding site" evidence="5">
    <location>
        <position position="1506"/>
    </location>
    <ligand>
        <name>Zn(2+)</name>
        <dbReference type="ChEBI" id="CHEBI:29105"/>
        <label>2</label>
    </ligand>
</feature>
<feature type="binding site" evidence="5">
    <location>
        <position position="1510"/>
    </location>
    <ligand>
        <name>Zn(2+)</name>
        <dbReference type="ChEBI" id="CHEBI:29105"/>
        <label>2</label>
    </ligand>
</feature>
<feature type="modified residue" description="Phosphoserine" evidence="11">
    <location>
        <position position="1564"/>
    </location>
</feature>
<feature type="sequence conflict" description="In Ref. 1; AAX59985." evidence="14" ref="1">
    <original>V</original>
    <variation>A</variation>
    <location>
        <position position="972"/>
    </location>
</feature>
<feature type="sequence conflict" description="In Ref. 1; AAX59985." evidence="14" ref="1">
    <original>T</original>
    <variation>R</variation>
    <location>
        <position position="1039"/>
    </location>
</feature>
<feature type="sequence conflict" description="In Ref. 1; AAX59985." evidence="14" ref="1">
    <original>I</original>
    <variation>L</variation>
    <location>
        <position position="1057"/>
    </location>
</feature>
<feature type="sequence conflict" description="In Ref. 1; AAX59985." evidence="14" ref="1">
    <original>E</original>
    <variation>Q</variation>
    <location>
        <position position="1230"/>
    </location>
</feature>
<reference evidence="15" key="1">
    <citation type="journal article" date="2005" name="FEBS Lett.">
        <title>The Drosophila homologue of the dystrophin gene - introns containing promoters are the major contributors to the large size of the gene.</title>
        <authorList>
            <person name="Neuman S."/>
            <person name="Kovalio M."/>
            <person name="Yaffe D."/>
            <person name="Nudel U."/>
        </authorList>
    </citation>
    <scope>NUCLEOTIDE SEQUENCE [MRNA]</scope>
</reference>
<reference evidence="16" key="2">
    <citation type="journal article" date="2000" name="Science">
        <title>The genome sequence of Drosophila melanogaster.</title>
        <authorList>
            <person name="Adams M.D."/>
            <person name="Celniker S.E."/>
            <person name="Holt R.A."/>
            <person name="Evans C.A."/>
            <person name="Gocayne J.D."/>
            <person name="Amanatides P.G."/>
            <person name="Scherer S.E."/>
            <person name="Li P.W."/>
            <person name="Hoskins R.A."/>
            <person name="Galle R.F."/>
            <person name="George R.A."/>
            <person name="Lewis S.E."/>
            <person name="Richards S."/>
            <person name="Ashburner M."/>
            <person name="Henderson S.N."/>
            <person name="Sutton G.G."/>
            <person name="Wortman J.R."/>
            <person name="Yandell M.D."/>
            <person name="Zhang Q."/>
            <person name="Chen L.X."/>
            <person name="Brandon R.C."/>
            <person name="Rogers Y.-H.C."/>
            <person name="Blazej R.G."/>
            <person name="Champe M."/>
            <person name="Pfeiffer B.D."/>
            <person name="Wan K.H."/>
            <person name="Doyle C."/>
            <person name="Baxter E.G."/>
            <person name="Helt G."/>
            <person name="Nelson C.R."/>
            <person name="Miklos G.L.G."/>
            <person name="Abril J.F."/>
            <person name="Agbayani A."/>
            <person name="An H.-J."/>
            <person name="Andrews-Pfannkoch C."/>
            <person name="Baldwin D."/>
            <person name="Ballew R.M."/>
            <person name="Basu A."/>
            <person name="Baxendale J."/>
            <person name="Bayraktaroglu L."/>
            <person name="Beasley E.M."/>
            <person name="Beeson K.Y."/>
            <person name="Benos P.V."/>
            <person name="Berman B.P."/>
            <person name="Bhandari D."/>
            <person name="Bolshakov S."/>
            <person name="Borkova D."/>
            <person name="Botchan M.R."/>
            <person name="Bouck J."/>
            <person name="Brokstein P."/>
            <person name="Brottier P."/>
            <person name="Burtis K.C."/>
            <person name="Busam D.A."/>
            <person name="Butler H."/>
            <person name="Cadieu E."/>
            <person name="Center A."/>
            <person name="Chandra I."/>
            <person name="Cherry J.M."/>
            <person name="Cawley S."/>
            <person name="Dahlke C."/>
            <person name="Davenport L.B."/>
            <person name="Davies P."/>
            <person name="de Pablos B."/>
            <person name="Delcher A."/>
            <person name="Deng Z."/>
            <person name="Mays A.D."/>
            <person name="Dew I."/>
            <person name="Dietz S.M."/>
            <person name="Dodson K."/>
            <person name="Doup L.E."/>
            <person name="Downes M."/>
            <person name="Dugan-Rocha S."/>
            <person name="Dunkov B.C."/>
            <person name="Dunn P."/>
            <person name="Durbin K.J."/>
            <person name="Evangelista C.C."/>
            <person name="Ferraz C."/>
            <person name="Ferriera S."/>
            <person name="Fleischmann W."/>
            <person name="Fosler C."/>
            <person name="Gabrielian A.E."/>
            <person name="Garg N.S."/>
            <person name="Gelbart W.M."/>
            <person name="Glasser K."/>
            <person name="Glodek A."/>
            <person name="Gong F."/>
            <person name="Gorrell J.H."/>
            <person name="Gu Z."/>
            <person name="Guan P."/>
            <person name="Harris M."/>
            <person name="Harris N.L."/>
            <person name="Harvey D.A."/>
            <person name="Heiman T.J."/>
            <person name="Hernandez J.R."/>
            <person name="Houck J."/>
            <person name="Hostin D."/>
            <person name="Houston K.A."/>
            <person name="Howland T.J."/>
            <person name="Wei M.-H."/>
            <person name="Ibegwam C."/>
            <person name="Jalali M."/>
            <person name="Kalush F."/>
            <person name="Karpen G.H."/>
            <person name="Ke Z."/>
            <person name="Kennison J.A."/>
            <person name="Ketchum K.A."/>
            <person name="Kimmel B.E."/>
            <person name="Kodira C.D."/>
            <person name="Kraft C.L."/>
            <person name="Kravitz S."/>
            <person name="Kulp D."/>
            <person name="Lai Z."/>
            <person name="Lasko P."/>
            <person name="Lei Y."/>
            <person name="Levitsky A.A."/>
            <person name="Li J.H."/>
            <person name="Li Z."/>
            <person name="Liang Y."/>
            <person name="Lin X."/>
            <person name="Liu X."/>
            <person name="Mattei B."/>
            <person name="McIntosh T.C."/>
            <person name="McLeod M.P."/>
            <person name="McPherson D."/>
            <person name="Merkulov G."/>
            <person name="Milshina N.V."/>
            <person name="Mobarry C."/>
            <person name="Morris J."/>
            <person name="Moshrefi A."/>
            <person name="Mount S.M."/>
            <person name="Moy M."/>
            <person name="Murphy B."/>
            <person name="Murphy L."/>
            <person name="Muzny D.M."/>
            <person name="Nelson D.L."/>
            <person name="Nelson D.R."/>
            <person name="Nelson K.A."/>
            <person name="Nixon K."/>
            <person name="Nusskern D.R."/>
            <person name="Pacleb J.M."/>
            <person name="Palazzolo M."/>
            <person name="Pittman G.S."/>
            <person name="Pan S."/>
            <person name="Pollard J."/>
            <person name="Puri V."/>
            <person name="Reese M.G."/>
            <person name="Reinert K."/>
            <person name="Remington K."/>
            <person name="Saunders R.D.C."/>
            <person name="Scheeler F."/>
            <person name="Shen H."/>
            <person name="Shue B.C."/>
            <person name="Siden-Kiamos I."/>
            <person name="Simpson M."/>
            <person name="Skupski M.P."/>
            <person name="Smith T.J."/>
            <person name="Spier E."/>
            <person name="Spradling A.C."/>
            <person name="Stapleton M."/>
            <person name="Strong R."/>
            <person name="Sun E."/>
            <person name="Svirskas R."/>
            <person name="Tector C."/>
            <person name="Turner R."/>
            <person name="Venter E."/>
            <person name="Wang A.H."/>
            <person name="Wang X."/>
            <person name="Wang Z.-Y."/>
            <person name="Wassarman D.A."/>
            <person name="Weinstock G.M."/>
            <person name="Weissenbach J."/>
            <person name="Williams S.M."/>
            <person name="Woodage T."/>
            <person name="Worley K.C."/>
            <person name="Wu D."/>
            <person name="Yang S."/>
            <person name="Yao Q.A."/>
            <person name="Ye J."/>
            <person name="Yeh R.-F."/>
            <person name="Zaveri J.S."/>
            <person name="Zhan M."/>
            <person name="Zhang G."/>
            <person name="Zhao Q."/>
            <person name="Zheng L."/>
            <person name="Zheng X.H."/>
            <person name="Zhong F.N."/>
            <person name="Zhong W."/>
            <person name="Zhou X."/>
            <person name="Zhu S.C."/>
            <person name="Zhu X."/>
            <person name="Smith H.O."/>
            <person name="Gibbs R.A."/>
            <person name="Myers E.W."/>
            <person name="Rubin G.M."/>
            <person name="Venter J.C."/>
        </authorList>
    </citation>
    <scope>NUCLEOTIDE SEQUENCE [LARGE SCALE GENOMIC DNA]</scope>
    <source>
        <strain>Berkeley</strain>
    </source>
</reference>
<reference evidence="14 16" key="3">
    <citation type="journal article" date="2002" name="Genome Biol.">
        <title>Annotation of the Drosophila melanogaster euchromatic genome: a systematic review.</title>
        <authorList>
            <person name="Misra S."/>
            <person name="Crosby M.A."/>
            <person name="Mungall C.J."/>
            <person name="Matthews B.B."/>
            <person name="Campbell K.S."/>
            <person name="Hradecky P."/>
            <person name="Huang Y."/>
            <person name="Kaminker J.S."/>
            <person name="Millburn G.H."/>
            <person name="Prochnik S.E."/>
            <person name="Smith C.D."/>
            <person name="Tupy J.L."/>
            <person name="Whitfield E.J."/>
            <person name="Bayraktaroglu L."/>
            <person name="Berman B.P."/>
            <person name="Bettencourt B.R."/>
            <person name="Celniker S.E."/>
            <person name="de Grey A.D.N.J."/>
            <person name="Drysdale R.A."/>
            <person name="Harris N.L."/>
            <person name="Richter J."/>
            <person name="Russo S."/>
            <person name="Schroeder A.J."/>
            <person name="Shu S.Q."/>
            <person name="Stapleton M."/>
            <person name="Yamada C."/>
            <person name="Ashburner M."/>
            <person name="Gelbart W.M."/>
            <person name="Rubin G.M."/>
            <person name="Lewis S.E."/>
        </authorList>
    </citation>
    <scope>GENOME REANNOTATION</scope>
    <scope>ALTERNATIVE SPLICING</scope>
    <source>
        <strain>Berkeley</strain>
    </source>
</reference>
<reference evidence="14 17" key="4">
    <citation type="journal article" date="2003" name="Genome Biol.">
        <title>An integrated gene annotation and transcriptional profiling approach towards the full gene content of the Drosophila genome.</title>
        <authorList>
            <person name="Hild M."/>
            <person name="Beckmann B."/>
            <person name="Haas S.A."/>
            <person name="Koch B."/>
            <person name="Solovyev V."/>
            <person name="Busold C."/>
            <person name="Fellenberg K."/>
            <person name="Boutros M."/>
            <person name="Vingron M."/>
            <person name="Sauer F."/>
            <person name="Hoheisel J.D."/>
            <person name="Paro R."/>
        </authorList>
    </citation>
    <scope>IDENTIFICATION</scope>
</reference>
<reference evidence="14" key="5">
    <citation type="journal article" date="2006" name="J. Neurosci.">
        <title>Dystrophin is required for appropriate retrograde control of neurotransmitter release at the Drosophila neuromuscular junction.</title>
        <authorList>
            <person name="van der Plas M.C."/>
            <person name="Pilgram G.S.K."/>
            <person name="Plomp J.J."/>
            <person name="de Jong A."/>
            <person name="Fradkin L.G."/>
            <person name="Noordermeer J.N."/>
        </authorList>
    </citation>
    <scope>SUBCELLULAR LOCATION</scope>
</reference>
<reference evidence="14" key="6">
    <citation type="journal article" date="2007" name="J. Biol. Chem.">
        <title>A putative Src homology 3 domain binding motif but not the C-terminal dystrophin WW domain binding motif is required for dystroglycan function in cellular polarity in Drosophila.</title>
        <authorList>
            <person name="Yatsenko A.S."/>
            <person name="Gray E.E."/>
            <person name="Shcherbata H.R."/>
            <person name="Patterson L.B."/>
            <person name="Sood V.D."/>
            <person name="Kucherenko M.M."/>
            <person name="Baker D."/>
            <person name="Ruohola-Baker H."/>
        </authorList>
    </citation>
    <scope>INTERACTION WITH DG</scope>
</reference>
<reference evidence="14" key="7">
    <citation type="journal article" date="2007" name="Mech. Dev.">
        <title>Drosophila Dystrophin is required for integrity of the musculature.</title>
        <authorList>
            <person name="van der Plas M.C."/>
            <person name="Pilgram G.S.K."/>
            <person name="de Jong A.W.M."/>
            <person name="Bansraj M.R.K.S."/>
            <person name="Fradkin L.G."/>
            <person name="Noordermeer J.N."/>
        </authorList>
    </citation>
    <scope>FUNCTION</scope>
    <scope>ALTERNATIVE SPLICING</scope>
    <scope>TISSUE SPECIFICITY</scope>
    <scope>DISRUPTION PHENOTYPE</scope>
</reference>
<reference evidence="14" key="8">
    <citation type="journal article" date="2008" name="J. Proteome Res.">
        <title>Phosphoproteome analysis of Drosophila melanogaster embryos.</title>
        <authorList>
            <person name="Zhai B."/>
            <person name="Villen J."/>
            <person name="Beausoleil S.A."/>
            <person name="Mintseris J."/>
            <person name="Gygi S.P."/>
        </authorList>
    </citation>
    <scope>PHOSPHORYLATION [LARGE SCALE ANALYSIS] AT SER-1564</scope>
    <scope>IDENTIFICATION BY MASS SPECTROMETRY</scope>
    <source>
        <tissue evidence="11">Embryo</tissue>
    </source>
</reference>